<feature type="chain" id="PRO_1000143563" description="ATP synthase subunit beta">
    <location>
        <begin position="1"/>
        <end position="478"/>
    </location>
</feature>
<feature type="binding site" evidence="1">
    <location>
        <begin position="151"/>
        <end position="158"/>
    </location>
    <ligand>
        <name>ATP</name>
        <dbReference type="ChEBI" id="CHEBI:30616"/>
    </ligand>
</feature>
<protein>
    <recommendedName>
        <fullName evidence="1">ATP synthase subunit beta</fullName>
        <ecNumber evidence="1">7.1.2.2</ecNumber>
    </recommendedName>
    <alternativeName>
        <fullName evidence="1">ATP synthase F1 sector subunit beta</fullName>
    </alternativeName>
    <alternativeName>
        <fullName evidence="1">F-ATPase subunit beta</fullName>
    </alternativeName>
</protein>
<sequence>MANKVGRITQVIGAVVDVQFDGHLPEILNALETTNQGNRLVLEVAQHLGESTVRCIAMDATEGLVRGLEVTDTGAPIQVPVGAGTLGRIMNVIGEPVDELGPIEAEATRGIHQPAPSYAEQATEAEILVTGIKVVDLLAPYAKGGKVGLFGGAGVGKTVLIMELINNVAKAHGGYSVFAGVGERTREGNDLYHEMIESNVNKDPHENGGSAAGSKCALVYGQMNEPPGARARVALTGLTVAEHFRDQGQDVLFFVDNIFRFTQAGSEVSALLGRIPSAVGYQPTLATDMGALQERITTTTKGSITSVQAIYVPADDLTDPAPAASFAHLDATTVLSRSIAEKGIYPAVDPLDSTSRMLSPAILGDEHYNTARQVQQTLQRYKALQDIIAILGMDELSEEDKITVARARKIERFLSQPFHVAEVFTGSPGKLVDLKDTIAGFKGLVEGKYDYLPEQAFYMVGSMEEAIEKGKKLAAEAA</sequence>
<reference key="1">
    <citation type="submission" date="2007-07" db="EMBL/GenBank/DDBJ databases">
        <title>Complete sequence of chromosome of Xanthobacter autotrophicus Py2.</title>
        <authorList>
            <consortium name="US DOE Joint Genome Institute"/>
            <person name="Copeland A."/>
            <person name="Lucas S."/>
            <person name="Lapidus A."/>
            <person name="Barry K."/>
            <person name="Glavina del Rio T."/>
            <person name="Hammon N."/>
            <person name="Israni S."/>
            <person name="Dalin E."/>
            <person name="Tice H."/>
            <person name="Pitluck S."/>
            <person name="Sims D."/>
            <person name="Brettin T."/>
            <person name="Bruce D."/>
            <person name="Detter J.C."/>
            <person name="Han C."/>
            <person name="Tapia R."/>
            <person name="Brainard J."/>
            <person name="Schmutz J."/>
            <person name="Larimer F."/>
            <person name="Land M."/>
            <person name="Hauser L."/>
            <person name="Kyrpides N."/>
            <person name="Kim E."/>
            <person name="Ensigns S.A."/>
            <person name="Richardson P."/>
        </authorList>
    </citation>
    <scope>NUCLEOTIDE SEQUENCE [LARGE SCALE GENOMIC DNA]</scope>
    <source>
        <strain>ATCC BAA-1158 / Py2</strain>
    </source>
</reference>
<accession>A7IH31</accession>
<proteinExistence type="inferred from homology"/>
<evidence type="ECO:0000255" key="1">
    <source>
        <dbReference type="HAMAP-Rule" id="MF_01347"/>
    </source>
</evidence>
<name>ATPB_XANP2</name>
<gene>
    <name evidence="1" type="primary">atpD</name>
    <name type="ordered locus">Xaut_2080</name>
</gene>
<dbReference type="EC" id="7.1.2.2" evidence="1"/>
<dbReference type="EMBL" id="CP000781">
    <property type="protein sequence ID" value="ABS67324.1"/>
    <property type="molecule type" value="Genomic_DNA"/>
</dbReference>
<dbReference type="SMR" id="A7IH31"/>
<dbReference type="STRING" id="78245.Xaut_2080"/>
<dbReference type="KEGG" id="xau:Xaut_2080"/>
<dbReference type="eggNOG" id="COG0055">
    <property type="taxonomic scope" value="Bacteria"/>
</dbReference>
<dbReference type="HOGENOM" id="CLU_022398_0_2_5"/>
<dbReference type="OrthoDB" id="9801639at2"/>
<dbReference type="PhylomeDB" id="A7IH31"/>
<dbReference type="Proteomes" id="UP000002417">
    <property type="component" value="Chromosome"/>
</dbReference>
<dbReference type="GO" id="GO:0005886">
    <property type="term" value="C:plasma membrane"/>
    <property type="evidence" value="ECO:0007669"/>
    <property type="project" value="UniProtKB-SubCell"/>
</dbReference>
<dbReference type="GO" id="GO:0045259">
    <property type="term" value="C:proton-transporting ATP synthase complex"/>
    <property type="evidence" value="ECO:0007669"/>
    <property type="project" value="UniProtKB-KW"/>
</dbReference>
<dbReference type="GO" id="GO:0005524">
    <property type="term" value="F:ATP binding"/>
    <property type="evidence" value="ECO:0007669"/>
    <property type="project" value="UniProtKB-UniRule"/>
</dbReference>
<dbReference type="GO" id="GO:0016887">
    <property type="term" value="F:ATP hydrolysis activity"/>
    <property type="evidence" value="ECO:0007669"/>
    <property type="project" value="InterPro"/>
</dbReference>
<dbReference type="GO" id="GO:0046933">
    <property type="term" value="F:proton-transporting ATP synthase activity, rotational mechanism"/>
    <property type="evidence" value="ECO:0007669"/>
    <property type="project" value="UniProtKB-UniRule"/>
</dbReference>
<dbReference type="CDD" id="cd18110">
    <property type="entry name" value="ATP-synt_F1_beta_C"/>
    <property type="match status" value="1"/>
</dbReference>
<dbReference type="CDD" id="cd18115">
    <property type="entry name" value="ATP-synt_F1_beta_N"/>
    <property type="match status" value="1"/>
</dbReference>
<dbReference type="CDD" id="cd01133">
    <property type="entry name" value="F1-ATPase_beta_CD"/>
    <property type="match status" value="1"/>
</dbReference>
<dbReference type="FunFam" id="1.10.1140.10:FF:000001">
    <property type="entry name" value="ATP synthase subunit beta"/>
    <property type="match status" value="1"/>
</dbReference>
<dbReference type="FunFam" id="2.40.10.170:FF:000005">
    <property type="entry name" value="ATP synthase subunit beta"/>
    <property type="match status" value="1"/>
</dbReference>
<dbReference type="FunFam" id="3.40.50.300:FF:000026">
    <property type="entry name" value="ATP synthase subunit beta"/>
    <property type="match status" value="1"/>
</dbReference>
<dbReference type="Gene3D" id="2.40.10.170">
    <property type="match status" value="1"/>
</dbReference>
<dbReference type="Gene3D" id="1.10.1140.10">
    <property type="entry name" value="Bovine Mitochondrial F1-atpase, Atp Synthase Beta Chain, Chain D, domain 3"/>
    <property type="match status" value="1"/>
</dbReference>
<dbReference type="Gene3D" id="3.40.50.300">
    <property type="entry name" value="P-loop containing nucleotide triphosphate hydrolases"/>
    <property type="match status" value="1"/>
</dbReference>
<dbReference type="HAMAP" id="MF_01347">
    <property type="entry name" value="ATP_synth_beta_bact"/>
    <property type="match status" value="1"/>
</dbReference>
<dbReference type="InterPro" id="IPR003593">
    <property type="entry name" value="AAA+_ATPase"/>
</dbReference>
<dbReference type="InterPro" id="IPR055190">
    <property type="entry name" value="ATP-synt_VA_C"/>
</dbReference>
<dbReference type="InterPro" id="IPR005722">
    <property type="entry name" value="ATP_synth_F1_bsu"/>
</dbReference>
<dbReference type="InterPro" id="IPR020003">
    <property type="entry name" value="ATPase_a/bsu_AS"/>
</dbReference>
<dbReference type="InterPro" id="IPR050053">
    <property type="entry name" value="ATPase_alpha/beta_chains"/>
</dbReference>
<dbReference type="InterPro" id="IPR004100">
    <property type="entry name" value="ATPase_F1/V1/A1_a/bsu_N"/>
</dbReference>
<dbReference type="InterPro" id="IPR036121">
    <property type="entry name" value="ATPase_F1/V1/A1_a/bsu_N_sf"/>
</dbReference>
<dbReference type="InterPro" id="IPR000194">
    <property type="entry name" value="ATPase_F1/V1/A1_a/bsu_nucl-bd"/>
</dbReference>
<dbReference type="InterPro" id="IPR024034">
    <property type="entry name" value="ATPase_F1/V1_b/a_C"/>
</dbReference>
<dbReference type="InterPro" id="IPR027417">
    <property type="entry name" value="P-loop_NTPase"/>
</dbReference>
<dbReference type="NCBIfam" id="TIGR01039">
    <property type="entry name" value="atpD"/>
    <property type="match status" value="1"/>
</dbReference>
<dbReference type="PANTHER" id="PTHR15184">
    <property type="entry name" value="ATP SYNTHASE"/>
    <property type="match status" value="1"/>
</dbReference>
<dbReference type="PANTHER" id="PTHR15184:SF71">
    <property type="entry name" value="ATP SYNTHASE SUBUNIT BETA, MITOCHONDRIAL"/>
    <property type="match status" value="1"/>
</dbReference>
<dbReference type="Pfam" id="PF00006">
    <property type="entry name" value="ATP-synt_ab"/>
    <property type="match status" value="1"/>
</dbReference>
<dbReference type="Pfam" id="PF02874">
    <property type="entry name" value="ATP-synt_ab_N"/>
    <property type="match status" value="1"/>
</dbReference>
<dbReference type="Pfam" id="PF22919">
    <property type="entry name" value="ATP-synt_VA_C"/>
    <property type="match status" value="1"/>
</dbReference>
<dbReference type="PIRSF" id="PIRSF039072">
    <property type="entry name" value="ATPase_subunit_beta"/>
    <property type="match status" value="1"/>
</dbReference>
<dbReference type="SMART" id="SM00382">
    <property type="entry name" value="AAA"/>
    <property type="match status" value="1"/>
</dbReference>
<dbReference type="SUPFAM" id="SSF47917">
    <property type="entry name" value="C-terminal domain of alpha and beta subunits of F1 ATP synthase"/>
    <property type="match status" value="1"/>
</dbReference>
<dbReference type="SUPFAM" id="SSF50615">
    <property type="entry name" value="N-terminal domain of alpha and beta subunits of F1 ATP synthase"/>
    <property type="match status" value="1"/>
</dbReference>
<dbReference type="SUPFAM" id="SSF52540">
    <property type="entry name" value="P-loop containing nucleoside triphosphate hydrolases"/>
    <property type="match status" value="1"/>
</dbReference>
<dbReference type="PROSITE" id="PS00152">
    <property type="entry name" value="ATPASE_ALPHA_BETA"/>
    <property type="match status" value="1"/>
</dbReference>
<keyword id="KW-0066">ATP synthesis</keyword>
<keyword id="KW-0067">ATP-binding</keyword>
<keyword id="KW-0997">Cell inner membrane</keyword>
<keyword id="KW-1003">Cell membrane</keyword>
<keyword id="KW-0139">CF(1)</keyword>
<keyword id="KW-0375">Hydrogen ion transport</keyword>
<keyword id="KW-0406">Ion transport</keyword>
<keyword id="KW-0472">Membrane</keyword>
<keyword id="KW-0547">Nucleotide-binding</keyword>
<keyword id="KW-1185">Reference proteome</keyword>
<keyword id="KW-1278">Translocase</keyword>
<keyword id="KW-0813">Transport</keyword>
<organism>
    <name type="scientific">Xanthobacter autotrophicus (strain ATCC BAA-1158 / Py2)</name>
    <dbReference type="NCBI Taxonomy" id="78245"/>
    <lineage>
        <taxon>Bacteria</taxon>
        <taxon>Pseudomonadati</taxon>
        <taxon>Pseudomonadota</taxon>
        <taxon>Alphaproteobacteria</taxon>
        <taxon>Hyphomicrobiales</taxon>
        <taxon>Xanthobacteraceae</taxon>
        <taxon>Xanthobacter</taxon>
    </lineage>
</organism>
<comment type="function">
    <text evidence="1">Produces ATP from ADP in the presence of a proton gradient across the membrane. The catalytic sites are hosted primarily by the beta subunits.</text>
</comment>
<comment type="catalytic activity">
    <reaction evidence="1">
        <text>ATP + H2O + 4 H(+)(in) = ADP + phosphate + 5 H(+)(out)</text>
        <dbReference type="Rhea" id="RHEA:57720"/>
        <dbReference type="ChEBI" id="CHEBI:15377"/>
        <dbReference type="ChEBI" id="CHEBI:15378"/>
        <dbReference type="ChEBI" id="CHEBI:30616"/>
        <dbReference type="ChEBI" id="CHEBI:43474"/>
        <dbReference type="ChEBI" id="CHEBI:456216"/>
        <dbReference type="EC" id="7.1.2.2"/>
    </reaction>
</comment>
<comment type="subunit">
    <text evidence="1">F-type ATPases have 2 components, CF(1) - the catalytic core - and CF(0) - the membrane proton channel. CF(1) has five subunits: alpha(3), beta(3), gamma(1), delta(1), epsilon(1). CF(0) has three main subunits: a(1), b(2) and c(9-12). The alpha and beta chains form an alternating ring which encloses part of the gamma chain. CF(1) is attached to CF(0) by a central stalk formed by the gamma and epsilon chains, while a peripheral stalk is formed by the delta and b chains.</text>
</comment>
<comment type="subcellular location">
    <subcellularLocation>
        <location evidence="1">Cell inner membrane</location>
        <topology evidence="1">Peripheral membrane protein</topology>
    </subcellularLocation>
</comment>
<comment type="similarity">
    <text evidence="1">Belongs to the ATPase alpha/beta chains family.</text>
</comment>